<keyword id="KW-0004">4Fe-4S</keyword>
<keyword id="KW-0249">Electron transport</keyword>
<keyword id="KW-0408">Iron</keyword>
<keyword id="KW-0411">Iron-sulfur</keyword>
<keyword id="KW-0472">Membrane</keyword>
<keyword id="KW-0479">Metal-binding</keyword>
<keyword id="KW-0560">Oxidoreductase</keyword>
<keyword id="KW-0602">Photosynthesis</keyword>
<keyword id="KW-0603">Photosystem I</keyword>
<keyword id="KW-0677">Repeat</keyword>
<keyword id="KW-0793">Thylakoid</keyword>
<keyword id="KW-0813">Transport</keyword>
<sequence length="81" mass="8887">MSHTVKIYDTCIGCTQCVRACPTDVLEMVPWDGCKAQQIASSPRTEDCVGCKRCETACPTDFLSIRVYLGAETTRSMGLAY</sequence>
<reference key="1">
    <citation type="online journal article" date="1997" name="Plant Gene Register">
        <title>Molecular cloning of the psaC gene for the 8-kDa Fe-S protein of photosystem I from the thermophilic cyanobacterium Mastigocladus laminosus.</title>
        <authorList>
            <person name="He Z.-Y."/>
            <person name="Chitnis V.P."/>
            <person name="Nechushtai R."/>
            <person name="Chitnis P.R."/>
        </authorList>
        <locator>PGR97-089</locator>
    </citation>
    <scope>NUCLEOTIDE SEQUENCE [GENOMIC DNA]</scope>
    <source>
        <strain>PCC 7605</strain>
    </source>
</reference>
<dbReference type="EC" id="1.97.1.12" evidence="2"/>
<dbReference type="EMBL" id="U97517">
    <property type="protein sequence ID" value="AAC64638.1"/>
    <property type="molecule type" value="Genomic_DNA"/>
</dbReference>
<dbReference type="SMR" id="O07112"/>
<dbReference type="GO" id="GO:0009522">
    <property type="term" value="C:photosystem I"/>
    <property type="evidence" value="ECO:0007669"/>
    <property type="project" value="UniProtKB-KW"/>
</dbReference>
<dbReference type="GO" id="GO:0031676">
    <property type="term" value="C:plasma membrane-derived thylakoid membrane"/>
    <property type="evidence" value="ECO:0007669"/>
    <property type="project" value="UniProtKB-SubCell"/>
</dbReference>
<dbReference type="GO" id="GO:0051539">
    <property type="term" value="F:4 iron, 4 sulfur cluster binding"/>
    <property type="evidence" value="ECO:0007669"/>
    <property type="project" value="UniProtKB-KW"/>
</dbReference>
<dbReference type="GO" id="GO:0009055">
    <property type="term" value="F:electron transfer activity"/>
    <property type="evidence" value="ECO:0007669"/>
    <property type="project" value="UniProtKB-UniRule"/>
</dbReference>
<dbReference type="GO" id="GO:0046872">
    <property type="term" value="F:metal ion binding"/>
    <property type="evidence" value="ECO:0007669"/>
    <property type="project" value="UniProtKB-KW"/>
</dbReference>
<dbReference type="GO" id="GO:0016491">
    <property type="term" value="F:oxidoreductase activity"/>
    <property type="evidence" value="ECO:0007669"/>
    <property type="project" value="UniProtKB-KW"/>
</dbReference>
<dbReference type="GO" id="GO:0009773">
    <property type="term" value="P:photosynthetic electron transport in photosystem I"/>
    <property type="evidence" value="ECO:0007669"/>
    <property type="project" value="InterPro"/>
</dbReference>
<dbReference type="FunFam" id="3.30.70.20:FF:000001">
    <property type="entry name" value="Photosystem I iron-sulfur center"/>
    <property type="match status" value="1"/>
</dbReference>
<dbReference type="Gene3D" id="3.30.70.20">
    <property type="match status" value="1"/>
</dbReference>
<dbReference type="HAMAP" id="MF_01303">
    <property type="entry name" value="PSI_PsaC"/>
    <property type="match status" value="1"/>
</dbReference>
<dbReference type="InterPro" id="IPR017896">
    <property type="entry name" value="4Fe4S_Fe-S-bd"/>
</dbReference>
<dbReference type="InterPro" id="IPR017900">
    <property type="entry name" value="4Fe4S_Fe_S_CS"/>
</dbReference>
<dbReference type="InterPro" id="IPR050157">
    <property type="entry name" value="PSI_iron-sulfur_center"/>
</dbReference>
<dbReference type="InterPro" id="IPR017491">
    <property type="entry name" value="PSI_PsaC"/>
</dbReference>
<dbReference type="NCBIfam" id="TIGR03048">
    <property type="entry name" value="PS_I_psaC"/>
    <property type="match status" value="1"/>
</dbReference>
<dbReference type="PANTHER" id="PTHR24960:SF79">
    <property type="entry name" value="PHOTOSYSTEM I IRON-SULFUR CENTER"/>
    <property type="match status" value="1"/>
</dbReference>
<dbReference type="PANTHER" id="PTHR24960">
    <property type="entry name" value="PHOTOSYSTEM I IRON-SULFUR CENTER-RELATED"/>
    <property type="match status" value="1"/>
</dbReference>
<dbReference type="Pfam" id="PF12838">
    <property type="entry name" value="Fer4_7"/>
    <property type="match status" value="1"/>
</dbReference>
<dbReference type="SUPFAM" id="SSF54862">
    <property type="entry name" value="4Fe-4S ferredoxins"/>
    <property type="match status" value="1"/>
</dbReference>
<dbReference type="PROSITE" id="PS00198">
    <property type="entry name" value="4FE4S_FER_1"/>
    <property type="match status" value="2"/>
</dbReference>
<dbReference type="PROSITE" id="PS51379">
    <property type="entry name" value="4FE4S_FER_2"/>
    <property type="match status" value="2"/>
</dbReference>
<organism>
    <name type="scientific">Mastigocladus laminosus</name>
    <name type="common">Fischerella sp.</name>
    <dbReference type="NCBI Taxonomy" id="83541"/>
    <lineage>
        <taxon>Bacteria</taxon>
        <taxon>Bacillati</taxon>
        <taxon>Cyanobacteriota</taxon>
        <taxon>Cyanophyceae</taxon>
        <taxon>Nostocales</taxon>
        <taxon>Hapalosiphonaceae</taxon>
        <taxon>Mastigocladus</taxon>
    </lineage>
</organism>
<evidence type="ECO:0000250" key="1"/>
<evidence type="ECO:0000255" key="2">
    <source>
        <dbReference type="HAMAP-Rule" id="MF_01303"/>
    </source>
</evidence>
<gene>
    <name evidence="2" type="primary">psaC</name>
</gene>
<accession>O07112</accession>
<feature type="initiator methionine" description="Removed" evidence="1">
    <location>
        <position position="1"/>
    </location>
</feature>
<feature type="chain" id="PRO_0000062012" description="Photosystem I iron-sulfur center">
    <location>
        <begin position="2"/>
        <end position="81"/>
    </location>
</feature>
<feature type="domain" description="4Fe-4S ferredoxin-type 1" evidence="2">
    <location>
        <begin position="2"/>
        <end position="31"/>
    </location>
</feature>
<feature type="domain" description="4Fe-4S ferredoxin-type 2" evidence="2">
    <location>
        <begin position="39"/>
        <end position="68"/>
    </location>
</feature>
<feature type="binding site" evidence="2">
    <location>
        <position position="11"/>
    </location>
    <ligand>
        <name>[4Fe-4S] cluster</name>
        <dbReference type="ChEBI" id="CHEBI:49883"/>
        <label>1</label>
    </ligand>
</feature>
<feature type="binding site" evidence="2">
    <location>
        <position position="14"/>
    </location>
    <ligand>
        <name>[4Fe-4S] cluster</name>
        <dbReference type="ChEBI" id="CHEBI:49883"/>
        <label>1</label>
    </ligand>
</feature>
<feature type="binding site" evidence="2">
    <location>
        <position position="17"/>
    </location>
    <ligand>
        <name>[4Fe-4S] cluster</name>
        <dbReference type="ChEBI" id="CHEBI:49883"/>
        <label>1</label>
    </ligand>
</feature>
<feature type="binding site" evidence="2">
    <location>
        <position position="21"/>
    </location>
    <ligand>
        <name>[4Fe-4S] cluster</name>
        <dbReference type="ChEBI" id="CHEBI:49883"/>
        <label>2</label>
    </ligand>
</feature>
<feature type="binding site" evidence="2">
    <location>
        <position position="48"/>
    </location>
    <ligand>
        <name>[4Fe-4S] cluster</name>
        <dbReference type="ChEBI" id="CHEBI:49883"/>
        <label>2</label>
    </ligand>
</feature>
<feature type="binding site" evidence="2">
    <location>
        <position position="51"/>
    </location>
    <ligand>
        <name>[4Fe-4S] cluster</name>
        <dbReference type="ChEBI" id="CHEBI:49883"/>
        <label>2</label>
    </ligand>
</feature>
<feature type="binding site" evidence="2">
    <location>
        <position position="54"/>
    </location>
    <ligand>
        <name>[4Fe-4S] cluster</name>
        <dbReference type="ChEBI" id="CHEBI:49883"/>
        <label>2</label>
    </ligand>
</feature>
<feature type="binding site" evidence="2">
    <location>
        <position position="58"/>
    </location>
    <ligand>
        <name>[4Fe-4S] cluster</name>
        <dbReference type="ChEBI" id="CHEBI:49883"/>
        <label>1</label>
    </ligand>
</feature>
<protein>
    <recommendedName>
        <fullName evidence="2">Photosystem I iron-sulfur center</fullName>
        <ecNumber evidence="2">1.97.1.12</ecNumber>
    </recommendedName>
    <alternativeName>
        <fullName evidence="2">9 kDa polypeptide</fullName>
    </alternativeName>
    <alternativeName>
        <fullName evidence="2">PSI-C</fullName>
    </alternativeName>
    <alternativeName>
        <fullName evidence="2">Photosystem I subunit VII</fullName>
    </alternativeName>
    <alternativeName>
        <fullName evidence="2">PsaC</fullName>
    </alternativeName>
</protein>
<comment type="function">
    <text evidence="2">Apoprotein for the two 4Fe-4S centers FA and FB of photosystem I (PSI); essential for photochemical activity. FB is the terminal electron acceptor of PSI, donating electrons to ferredoxin. The C-terminus interacts with PsaA/B/D and helps assemble the protein into the PSI complex. Required for binding of PsaD and PsaE to PSI. PSI is a plastocyanin/cytochrome c6-ferredoxin oxidoreductase, converting photonic excitation into a charge separation, which transfers an electron from the donor P700 chlorophyll pair to the spectroscopically characterized acceptors A0, A1, FX, FA and FB in turn.</text>
</comment>
<comment type="catalytic activity">
    <reaction evidence="2">
        <text>reduced [plastocyanin] + hnu + oxidized [2Fe-2S]-[ferredoxin] = oxidized [plastocyanin] + reduced [2Fe-2S]-[ferredoxin]</text>
        <dbReference type="Rhea" id="RHEA:30407"/>
        <dbReference type="Rhea" id="RHEA-COMP:10000"/>
        <dbReference type="Rhea" id="RHEA-COMP:10001"/>
        <dbReference type="Rhea" id="RHEA-COMP:10039"/>
        <dbReference type="Rhea" id="RHEA-COMP:10040"/>
        <dbReference type="ChEBI" id="CHEBI:29036"/>
        <dbReference type="ChEBI" id="CHEBI:30212"/>
        <dbReference type="ChEBI" id="CHEBI:33737"/>
        <dbReference type="ChEBI" id="CHEBI:33738"/>
        <dbReference type="ChEBI" id="CHEBI:49552"/>
        <dbReference type="EC" id="1.97.1.12"/>
    </reaction>
</comment>
<comment type="cofactor">
    <cofactor evidence="2">
        <name>[4Fe-4S] cluster</name>
        <dbReference type="ChEBI" id="CHEBI:49883"/>
    </cofactor>
    <text evidence="2">Binds 2 [4Fe-4S] clusters. Cluster 2 is most probably the spectroscopically characterized electron acceptor FA and cluster 1 is most probably FB.</text>
</comment>
<comment type="subunit">
    <text evidence="2">The cyanobacterial PSI reaction center is composed of one copy each of PsaA,B,C,D,E,F,I,J,K,L,M and X, and forms trimeric complexes.</text>
</comment>
<comment type="subcellular location">
    <subcellularLocation>
        <location evidence="2">Cellular thylakoid membrane</location>
        <topology evidence="2">Peripheral membrane protein</topology>
        <orientation evidence="2">Cytoplasmic side</orientation>
    </subcellularLocation>
</comment>
<proteinExistence type="inferred from homology"/>
<name>PSAC_MASLA</name>